<feature type="chain" id="PRO_0000144035" description="Calhepatin">
    <location>
        <begin position="1"/>
        <end position="75"/>
    </location>
</feature>
<feature type="domain" description="EF-hand 1" evidence="1">
    <location>
        <begin position="2"/>
        <end position="37"/>
    </location>
</feature>
<feature type="domain" description="EF-hand 2" evidence="1">
    <location>
        <begin position="38"/>
        <end position="73"/>
    </location>
</feature>
<feature type="binding site" evidence="1">
    <location>
        <position position="15"/>
    </location>
    <ligand>
        <name>Ca(2+)</name>
        <dbReference type="ChEBI" id="CHEBI:29108"/>
        <label>1</label>
    </ligand>
</feature>
<feature type="binding site" evidence="1">
    <location>
        <position position="17"/>
    </location>
    <ligand>
        <name>Ca(2+)</name>
        <dbReference type="ChEBI" id="CHEBI:29108"/>
        <label>1</label>
    </ligand>
</feature>
<feature type="binding site" evidence="1">
    <location>
        <position position="19"/>
    </location>
    <ligand>
        <name>Ca(2+)</name>
        <dbReference type="ChEBI" id="CHEBI:29108"/>
        <label>1</label>
    </ligand>
</feature>
<feature type="binding site" evidence="1">
    <location>
        <position position="21"/>
    </location>
    <ligand>
        <name>Ca(2+)</name>
        <dbReference type="ChEBI" id="CHEBI:29108"/>
        <label>1</label>
    </ligand>
</feature>
<feature type="binding site" evidence="1">
    <location>
        <position position="26"/>
    </location>
    <ligand>
        <name>Ca(2+)</name>
        <dbReference type="ChEBI" id="CHEBI:29108"/>
        <label>1</label>
    </ligand>
</feature>
<feature type="binding site" evidence="1">
    <location>
        <position position="51"/>
    </location>
    <ligand>
        <name>Ca(2+)</name>
        <dbReference type="ChEBI" id="CHEBI:29108"/>
        <label>2</label>
    </ligand>
</feature>
<feature type="binding site" evidence="1">
    <location>
        <position position="53"/>
    </location>
    <ligand>
        <name>Ca(2+)</name>
        <dbReference type="ChEBI" id="CHEBI:29108"/>
        <label>2</label>
    </ligand>
</feature>
<feature type="binding site" evidence="1">
    <location>
        <position position="55"/>
    </location>
    <ligand>
        <name>Ca(2+)</name>
        <dbReference type="ChEBI" id="CHEBI:29108"/>
        <label>2</label>
    </ligand>
</feature>
<feature type="binding site" evidence="1">
    <location>
        <position position="57"/>
    </location>
    <ligand>
        <name>Ca(2+)</name>
        <dbReference type="ChEBI" id="CHEBI:29108"/>
        <label>2</label>
    </ligand>
</feature>
<feature type="binding site" evidence="1">
    <location>
        <position position="62"/>
    </location>
    <ligand>
        <name>Ca(2+)</name>
        <dbReference type="ChEBI" id="CHEBI:29108"/>
        <label>2</label>
    </ligand>
</feature>
<feature type="modified residue" description="N-acetylserine" evidence="2">
    <location>
        <position position="1"/>
    </location>
</feature>
<keyword id="KW-0007">Acetylation</keyword>
<keyword id="KW-0106">Calcium</keyword>
<keyword id="KW-0186">Copper</keyword>
<keyword id="KW-0903">Direct protein sequencing</keyword>
<keyword id="KW-0479">Metal-binding</keyword>
<keyword id="KW-0677">Repeat</keyword>
<organism>
    <name type="scientific">Lepidosiren paradoxus</name>
    <name type="common">South American lungfish</name>
    <dbReference type="NCBI Taxonomy" id="7883"/>
    <lineage>
        <taxon>Eukaryota</taxon>
        <taxon>Metazoa</taxon>
        <taxon>Chordata</taxon>
        <taxon>Craniata</taxon>
        <taxon>Vertebrata</taxon>
        <taxon>Euteleostomi</taxon>
        <taxon>Dipnomorpha</taxon>
        <taxon>Ceratodontiformes</taxon>
        <taxon>Lepidosirenoidei</taxon>
        <taxon>Lepidosirenidae</taxon>
        <taxon>Lepidosiren</taxon>
    </lineage>
</organism>
<reference key="1">
    <citation type="journal article" date="2002" name="Eur. J. Biochem.">
        <title>Structural and biochemical characterization of calhepatin, an S100-like calcium-binding protein from the liver of lungfish (Lepidosiren paradoxa).</title>
        <authorList>
            <person name="Di Pietro S.M."/>
            <person name="Santome J.A."/>
        </authorList>
    </citation>
    <scope>PROTEIN SEQUENCE</scope>
    <scope>FUNCTION</scope>
    <scope>MASS SPECTROMETRY</scope>
    <scope>ACETYLATION AT SER-1</scope>
    <scope>3D-STRUCTURE MODELING</scope>
    <source>
        <tissue>Liver</tissue>
    </source>
</reference>
<sequence length="75" mass="8628">SADEQKLRERFEALDKDKSGTLSVDELYEGVHAVHPKVSRNDIVKIIEKVDTNKDGQVSWQEFIEAFKRLADLKL</sequence>
<accession>P82978</accession>
<evidence type="ECO:0000255" key="1">
    <source>
        <dbReference type="PROSITE-ProRule" id="PRU00448"/>
    </source>
</evidence>
<evidence type="ECO:0000269" key="2">
    <source>
    </source>
</evidence>
<evidence type="ECO:0000305" key="3"/>
<proteinExistence type="evidence at protein level"/>
<dbReference type="SMR" id="P82978"/>
<dbReference type="iPTMnet" id="P82978"/>
<dbReference type="GO" id="GO:0005509">
    <property type="term" value="F:calcium ion binding"/>
    <property type="evidence" value="ECO:0007669"/>
    <property type="project" value="InterPro"/>
</dbReference>
<dbReference type="CDD" id="cd00051">
    <property type="entry name" value="EFh"/>
    <property type="match status" value="1"/>
</dbReference>
<dbReference type="Gene3D" id="1.10.238.10">
    <property type="entry name" value="EF-hand"/>
    <property type="match status" value="1"/>
</dbReference>
<dbReference type="InterPro" id="IPR011992">
    <property type="entry name" value="EF-hand-dom_pair"/>
</dbReference>
<dbReference type="InterPro" id="IPR018247">
    <property type="entry name" value="EF_Hand_1_Ca_BS"/>
</dbReference>
<dbReference type="InterPro" id="IPR002048">
    <property type="entry name" value="EF_hand_dom"/>
</dbReference>
<dbReference type="Pfam" id="PF13499">
    <property type="entry name" value="EF-hand_7"/>
    <property type="match status" value="1"/>
</dbReference>
<dbReference type="SMART" id="SM00054">
    <property type="entry name" value="EFh"/>
    <property type="match status" value="2"/>
</dbReference>
<dbReference type="SUPFAM" id="SSF47473">
    <property type="entry name" value="EF-hand"/>
    <property type="match status" value="1"/>
</dbReference>
<dbReference type="PROSITE" id="PS00018">
    <property type="entry name" value="EF_HAND_1"/>
    <property type="match status" value="2"/>
</dbReference>
<dbReference type="PROSITE" id="PS50222">
    <property type="entry name" value="EF_HAND_2"/>
    <property type="match status" value="2"/>
</dbReference>
<protein>
    <recommendedName>
        <fullName>Calhepatin</fullName>
    </recommendedName>
</protein>
<name>S100_LEPPA</name>
<comment type="function">
    <text evidence="2">Binds both calcium and copper, but not zinc. May be involved in calcium signal transduction.</text>
</comment>
<comment type="subunit">
    <text>Monomer and homodimer.</text>
</comment>
<comment type="tissue specificity">
    <text>Liver, and to a much lower level intestine.</text>
</comment>
<comment type="mass spectrometry" mass="8672.0" method="MALDI" evidence="2"/>
<comment type="similarity">
    <text evidence="3">Belongs to the S-100 family.</text>
</comment>